<organism>
    <name type="scientific">Aspergillus fumigatus (strain ATCC MYA-4609 / CBS 101355 / FGSC A1100 / Af293)</name>
    <name type="common">Neosartorya fumigata</name>
    <dbReference type="NCBI Taxonomy" id="330879"/>
    <lineage>
        <taxon>Eukaryota</taxon>
        <taxon>Fungi</taxon>
        <taxon>Dikarya</taxon>
        <taxon>Ascomycota</taxon>
        <taxon>Pezizomycotina</taxon>
        <taxon>Eurotiomycetes</taxon>
        <taxon>Eurotiomycetidae</taxon>
        <taxon>Eurotiales</taxon>
        <taxon>Aspergillaceae</taxon>
        <taxon>Aspergillus</taxon>
        <taxon>Aspergillus subgen. Fumigati</taxon>
    </lineage>
</organism>
<feature type="chain" id="PRO_0000301712" description="Chromosome segregation in meiosis protein 3">
    <location>
        <begin position="1"/>
        <end position="270"/>
    </location>
</feature>
<feature type="region of interest" description="Disordered" evidence="2">
    <location>
        <begin position="1"/>
        <end position="20"/>
    </location>
</feature>
<feature type="compositionally biased region" description="Basic and acidic residues" evidence="2">
    <location>
        <begin position="8"/>
        <end position="20"/>
    </location>
</feature>
<sequence>MENEGTLQDDRPASPKHAGDLFDYDFALDELWQETPNMPNNGAPMQASARDESGLGLGLDEEVKVTKKRQPVAKLDESRLLSQPGIPKLRRTAKKKLRFKGKGHEFSDAARLLNFYQLWLDDLFPRAKFADGLAIIERLGHSKRLQAMRKEWIDEEKPKDASENHNDVLKASESSGSQSDDPVVAFGGLNMADTKRSKGDIAGDYTSDAERMRVEVNLNPSGQRKLDEGLFMTDNDDVAQQPDNLGAPDDDELDALLKEQELLLMNNASA</sequence>
<comment type="function">
    <text evidence="1">Forms a fork protection complex (FPC) with tof1 and which is required for chromosome segregation during meiosis and DNA damage repair. FPC coordinates leading and lagging strand synthesis and moves with the replication fork. FPC stabilizes replication forks in a configuration that is recognized by replication checkpoint sensors (By similarity).</text>
</comment>
<comment type="subunit">
    <text evidence="1">Component of the fork protection complex (FPC) consisting of tof1 and csm3.</text>
</comment>
<comment type="subcellular location">
    <subcellularLocation>
        <location evidence="1">Nucleus</location>
    </subcellularLocation>
</comment>
<comment type="similarity">
    <text evidence="3">Belongs to the CSM3 family.</text>
</comment>
<dbReference type="EMBL" id="AAHF01000016">
    <property type="protein sequence ID" value="EBA27200.1"/>
    <property type="molecule type" value="Genomic_DNA"/>
</dbReference>
<dbReference type="RefSeq" id="XP_001481554.1">
    <property type="nucleotide sequence ID" value="XM_001481504.1"/>
</dbReference>
<dbReference type="SMR" id="A4DA84"/>
<dbReference type="FunCoup" id="A4DA84">
    <property type="interactions" value="226"/>
</dbReference>
<dbReference type="STRING" id="330879.A4DA84"/>
<dbReference type="EnsemblFungi" id="EBA27200">
    <property type="protein sequence ID" value="EBA27200"/>
    <property type="gene ID" value="AFUA_4G04745"/>
</dbReference>
<dbReference type="GeneID" id="5077106"/>
<dbReference type="KEGG" id="afm:AFUA_4G04745"/>
<dbReference type="VEuPathDB" id="FungiDB:Afu4g04745"/>
<dbReference type="eggNOG" id="KOG3004">
    <property type="taxonomic scope" value="Eukaryota"/>
</dbReference>
<dbReference type="HOGENOM" id="CLU_036204_0_0_1"/>
<dbReference type="InParanoid" id="A4DA84"/>
<dbReference type="OMA" id="ETPNMPN"/>
<dbReference type="OrthoDB" id="437078at2759"/>
<dbReference type="Proteomes" id="UP000002530">
    <property type="component" value="Chromosome 4"/>
</dbReference>
<dbReference type="GO" id="GO:0031298">
    <property type="term" value="C:replication fork protection complex"/>
    <property type="evidence" value="ECO:0000318"/>
    <property type="project" value="GO_Central"/>
</dbReference>
<dbReference type="GO" id="GO:0003677">
    <property type="term" value="F:DNA binding"/>
    <property type="evidence" value="ECO:0000318"/>
    <property type="project" value="GO_Central"/>
</dbReference>
<dbReference type="GO" id="GO:0006281">
    <property type="term" value="P:DNA repair"/>
    <property type="evidence" value="ECO:0007669"/>
    <property type="project" value="UniProtKB-KW"/>
</dbReference>
<dbReference type="GO" id="GO:0000076">
    <property type="term" value="P:DNA replication checkpoint signaling"/>
    <property type="evidence" value="ECO:0000318"/>
    <property type="project" value="GO_Central"/>
</dbReference>
<dbReference type="GO" id="GO:0051321">
    <property type="term" value="P:meiotic cell cycle"/>
    <property type="evidence" value="ECO:0007669"/>
    <property type="project" value="UniProtKB-KW"/>
</dbReference>
<dbReference type="GO" id="GO:0043111">
    <property type="term" value="P:replication fork arrest"/>
    <property type="evidence" value="ECO:0000318"/>
    <property type="project" value="GO_Central"/>
</dbReference>
<dbReference type="GO" id="GO:0031297">
    <property type="term" value="P:replication fork processing"/>
    <property type="evidence" value="ECO:0007669"/>
    <property type="project" value="InterPro"/>
</dbReference>
<dbReference type="InterPro" id="IPR012923">
    <property type="entry name" value="Csm3"/>
</dbReference>
<dbReference type="InterPro" id="IPR040038">
    <property type="entry name" value="TIPIN/Csm3/Swi3"/>
</dbReference>
<dbReference type="PANTHER" id="PTHR13220">
    <property type="entry name" value="TIMELESS INTERACTING-RELATED"/>
    <property type="match status" value="1"/>
</dbReference>
<dbReference type="PANTHER" id="PTHR13220:SF11">
    <property type="entry name" value="TIMELESS-INTERACTING PROTEIN"/>
    <property type="match status" value="1"/>
</dbReference>
<dbReference type="Pfam" id="PF07962">
    <property type="entry name" value="Swi3"/>
    <property type="match status" value="1"/>
</dbReference>
<evidence type="ECO:0000250" key="1"/>
<evidence type="ECO:0000256" key="2">
    <source>
        <dbReference type="SAM" id="MobiDB-lite"/>
    </source>
</evidence>
<evidence type="ECO:0000305" key="3"/>
<keyword id="KW-0131">Cell cycle</keyword>
<keyword id="KW-0227">DNA damage</keyword>
<keyword id="KW-0234">DNA repair</keyword>
<keyword id="KW-0236">DNA replication inhibitor</keyword>
<keyword id="KW-0469">Meiosis</keyword>
<keyword id="KW-0539">Nucleus</keyword>
<keyword id="KW-1185">Reference proteome</keyword>
<accession>A4DA84</accession>
<protein>
    <recommendedName>
        <fullName>Chromosome segregation in meiosis protein 3</fullName>
    </recommendedName>
</protein>
<name>CSM3_ASPFU</name>
<gene>
    <name type="primary">csm3</name>
    <name type="ORF">AFUA_4G04745</name>
</gene>
<reference key="1">
    <citation type="journal article" date="2005" name="Nature">
        <title>Genomic sequence of the pathogenic and allergenic filamentous fungus Aspergillus fumigatus.</title>
        <authorList>
            <person name="Nierman W.C."/>
            <person name="Pain A."/>
            <person name="Anderson M.J."/>
            <person name="Wortman J.R."/>
            <person name="Kim H.S."/>
            <person name="Arroyo J."/>
            <person name="Berriman M."/>
            <person name="Abe K."/>
            <person name="Archer D.B."/>
            <person name="Bermejo C."/>
            <person name="Bennett J.W."/>
            <person name="Bowyer P."/>
            <person name="Chen D."/>
            <person name="Collins M."/>
            <person name="Coulsen R."/>
            <person name="Davies R."/>
            <person name="Dyer P.S."/>
            <person name="Farman M.L."/>
            <person name="Fedorova N."/>
            <person name="Fedorova N.D."/>
            <person name="Feldblyum T.V."/>
            <person name="Fischer R."/>
            <person name="Fosker N."/>
            <person name="Fraser A."/>
            <person name="Garcia J.L."/>
            <person name="Garcia M.J."/>
            <person name="Goble A."/>
            <person name="Goldman G.H."/>
            <person name="Gomi K."/>
            <person name="Griffith-Jones S."/>
            <person name="Gwilliam R."/>
            <person name="Haas B.J."/>
            <person name="Haas H."/>
            <person name="Harris D.E."/>
            <person name="Horiuchi H."/>
            <person name="Huang J."/>
            <person name="Humphray S."/>
            <person name="Jimenez J."/>
            <person name="Keller N."/>
            <person name="Khouri H."/>
            <person name="Kitamoto K."/>
            <person name="Kobayashi T."/>
            <person name="Konzack S."/>
            <person name="Kulkarni R."/>
            <person name="Kumagai T."/>
            <person name="Lafton A."/>
            <person name="Latge J.-P."/>
            <person name="Li W."/>
            <person name="Lord A."/>
            <person name="Lu C."/>
            <person name="Majoros W.H."/>
            <person name="May G.S."/>
            <person name="Miller B.L."/>
            <person name="Mohamoud Y."/>
            <person name="Molina M."/>
            <person name="Monod M."/>
            <person name="Mouyna I."/>
            <person name="Mulligan S."/>
            <person name="Murphy L.D."/>
            <person name="O'Neil S."/>
            <person name="Paulsen I."/>
            <person name="Penalva M.A."/>
            <person name="Pertea M."/>
            <person name="Price C."/>
            <person name="Pritchard B.L."/>
            <person name="Quail M.A."/>
            <person name="Rabbinowitsch E."/>
            <person name="Rawlins N."/>
            <person name="Rajandream M.A."/>
            <person name="Reichard U."/>
            <person name="Renauld H."/>
            <person name="Robson G.D."/>
            <person name="Rodriguez de Cordoba S."/>
            <person name="Rodriguez-Pena J.M."/>
            <person name="Ronning C.M."/>
            <person name="Rutter S."/>
            <person name="Salzberg S.L."/>
            <person name="Sanchez M."/>
            <person name="Sanchez-Ferrero J.C."/>
            <person name="Saunders D."/>
            <person name="Seeger K."/>
            <person name="Squares R."/>
            <person name="Squares S."/>
            <person name="Takeuchi M."/>
            <person name="Tekaia F."/>
            <person name="Turner G."/>
            <person name="Vazquez de Aldana C.R."/>
            <person name="Weidman J."/>
            <person name="White O."/>
            <person name="Woodward J.R."/>
            <person name="Yu J.-H."/>
            <person name="Fraser C.M."/>
            <person name="Galagan J.E."/>
            <person name="Asai K."/>
            <person name="Machida M."/>
            <person name="Hall N."/>
            <person name="Barrell B.G."/>
            <person name="Denning D.W."/>
        </authorList>
    </citation>
    <scope>NUCLEOTIDE SEQUENCE [LARGE SCALE GENOMIC DNA]</scope>
    <source>
        <strain>ATCC MYA-4609 / CBS 101355 / FGSC A1100 / Af293</strain>
    </source>
</reference>
<proteinExistence type="inferred from homology"/>